<evidence type="ECO:0000255" key="1">
    <source>
        <dbReference type="PROSITE-ProRule" id="PRU10023"/>
    </source>
</evidence>
<evidence type="ECO:0000305" key="2"/>
<proteinExistence type="inferred from homology"/>
<name>CHSD_PETHY</name>
<keyword id="KW-0012">Acyltransferase</keyword>
<keyword id="KW-0284">Flavonoid biosynthesis</keyword>
<keyword id="KW-0808">Transferase</keyword>
<organism>
    <name type="scientific">Petunia hybrida</name>
    <name type="common">Petunia</name>
    <dbReference type="NCBI Taxonomy" id="4102"/>
    <lineage>
        <taxon>Eukaryota</taxon>
        <taxon>Viridiplantae</taxon>
        <taxon>Streptophyta</taxon>
        <taxon>Embryophyta</taxon>
        <taxon>Tracheophyta</taxon>
        <taxon>Spermatophyta</taxon>
        <taxon>Magnoliopsida</taxon>
        <taxon>eudicotyledons</taxon>
        <taxon>Gunneridae</taxon>
        <taxon>Pentapetalae</taxon>
        <taxon>asterids</taxon>
        <taxon>lamiids</taxon>
        <taxon>Solanales</taxon>
        <taxon>Solanaceae</taxon>
        <taxon>Petunioideae</taxon>
        <taxon>Petunia</taxon>
    </lineage>
</organism>
<protein>
    <recommendedName>
        <fullName>Chalcone synthase D</fullName>
        <ecNumber>2.3.1.74</ecNumber>
    </recommendedName>
    <alternativeName>
        <fullName>Naringenin-chalcone synthase D</fullName>
    </alternativeName>
</protein>
<dbReference type="EC" id="2.3.1.74"/>
<dbReference type="EMBL" id="X14593">
    <property type="protein sequence ID" value="CAA32733.1"/>
    <property type="molecule type" value="Genomic_DNA"/>
</dbReference>
<dbReference type="PIR" id="A72821">
    <property type="entry name" value="SYPJCD"/>
</dbReference>
<dbReference type="SMR" id="P22925"/>
<dbReference type="UniPathway" id="UPA00154"/>
<dbReference type="GO" id="GO:0016210">
    <property type="term" value="F:naringenin-chalcone synthase activity"/>
    <property type="evidence" value="ECO:0007669"/>
    <property type="project" value="UniProtKB-EC"/>
</dbReference>
<dbReference type="GO" id="GO:0009813">
    <property type="term" value="P:flavonoid biosynthetic process"/>
    <property type="evidence" value="ECO:0007669"/>
    <property type="project" value="UniProtKB-UniPathway"/>
</dbReference>
<dbReference type="GO" id="GO:0030639">
    <property type="term" value="P:polyketide biosynthetic process"/>
    <property type="evidence" value="ECO:0007669"/>
    <property type="project" value="TreeGrafter"/>
</dbReference>
<dbReference type="CDD" id="cd00831">
    <property type="entry name" value="CHS_like"/>
    <property type="match status" value="1"/>
</dbReference>
<dbReference type="FunFam" id="3.40.47.10:FF:000014">
    <property type="entry name" value="Chalcone synthase 1"/>
    <property type="match status" value="1"/>
</dbReference>
<dbReference type="FunFam" id="3.40.47.10:FF:000025">
    <property type="entry name" value="Chalcone synthase 2"/>
    <property type="match status" value="1"/>
</dbReference>
<dbReference type="Gene3D" id="3.40.47.10">
    <property type="match status" value="2"/>
</dbReference>
<dbReference type="InterPro" id="IPR012328">
    <property type="entry name" value="Chalcone/stilbene_synt_C"/>
</dbReference>
<dbReference type="InterPro" id="IPR001099">
    <property type="entry name" value="Chalcone/stilbene_synt_N"/>
</dbReference>
<dbReference type="InterPro" id="IPR018088">
    <property type="entry name" value="Chalcone/stilbene_synthase_AS"/>
</dbReference>
<dbReference type="InterPro" id="IPR011141">
    <property type="entry name" value="Polyketide_synthase_type-III"/>
</dbReference>
<dbReference type="InterPro" id="IPR016039">
    <property type="entry name" value="Thiolase-like"/>
</dbReference>
<dbReference type="PANTHER" id="PTHR11877:SF80">
    <property type="entry name" value="CHALCONE SYNTHASE 1"/>
    <property type="match status" value="1"/>
</dbReference>
<dbReference type="PANTHER" id="PTHR11877">
    <property type="entry name" value="HYDROXYMETHYLGLUTARYL-COA SYNTHASE"/>
    <property type="match status" value="1"/>
</dbReference>
<dbReference type="Pfam" id="PF02797">
    <property type="entry name" value="Chal_sti_synt_C"/>
    <property type="match status" value="1"/>
</dbReference>
<dbReference type="Pfam" id="PF00195">
    <property type="entry name" value="Chal_sti_synt_N"/>
    <property type="match status" value="1"/>
</dbReference>
<dbReference type="PIRSF" id="PIRSF000451">
    <property type="entry name" value="PKS_III"/>
    <property type="match status" value="1"/>
</dbReference>
<dbReference type="SUPFAM" id="SSF53901">
    <property type="entry name" value="Thiolase-like"/>
    <property type="match status" value="2"/>
</dbReference>
<dbReference type="PROSITE" id="PS00441">
    <property type="entry name" value="CHALCONE_SYNTH"/>
    <property type="match status" value="1"/>
</dbReference>
<accession>P22925</accession>
<comment type="function">
    <text>The primary product of this enzyme is 4,2',4',6'-tetrahydroxychalcone (also termed naringenin-chalcone or chalcone) which can under specific conditions spontaneously isomerize into naringenin.</text>
</comment>
<comment type="catalytic activity">
    <reaction evidence="1">
        <text>(E)-4-coumaroyl-CoA + 3 malonyl-CoA + 3 H(+) = 2',4,4',6'-tetrahydroxychalcone + 3 CO2 + 4 CoA</text>
        <dbReference type="Rhea" id="RHEA:11128"/>
        <dbReference type="ChEBI" id="CHEBI:15378"/>
        <dbReference type="ChEBI" id="CHEBI:15413"/>
        <dbReference type="ChEBI" id="CHEBI:16526"/>
        <dbReference type="ChEBI" id="CHEBI:57287"/>
        <dbReference type="ChEBI" id="CHEBI:57384"/>
        <dbReference type="ChEBI" id="CHEBI:85008"/>
        <dbReference type="EC" id="2.3.1.74"/>
    </reaction>
</comment>
<comment type="pathway">
    <text>Secondary metabolite biosynthesis; flavonoid biosynthesis.</text>
</comment>
<comment type="similarity">
    <text evidence="2">Belongs to the thiolase-like superfamily. Chalcone/stilbene synthases family.</text>
</comment>
<reference key="1">
    <citation type="journal article" date="1989" name="Gene">
        <title>Cloning and molecular characterization of the chalcone synthase multigene family of Petunia hybrida.</title>
        <authorList>
            <person name="Koes R.E."/>
            <person name="Spelt C.E."/>
            <person name="van den Elzen P.J.M."/>
            <person name="Mol J.N.M."/>
        </authorList>
    </citation>
    <scope>NUCLEOTIDE SEQUENCE [GENOMIC DNA]</scope>
    <source>
        <strain>cv. Violet 30</strain>
        <tissue>Leaf</tissue>
    </source>
</reference>
<feature type="chain" id="PRO_0000216031" description="Chalcone synthase D">
    <location>
        <begin position="1"/>
        <end position="419"/>
    </location>
</feature>
<feature type="active site" evidence="1">
    <location>
        <position position="164"/>
    </location>
</feature>
<gene>
    <name type="primary">CHSD</name>
</gene>
<sequence>MVTVEEVRNAQRAEGPATVLAIGTATPSNCVDQSTYPDYYFRITDSEHKTELKEKFKRICDKSMIKKRYMHLTEKILKENPNICESMAPSLDARTNIYAVEVPKLGKEAAEKAIEEWNQPKSRITHLVFCTTTGVSMPGADFQLTKLLGLGSSVKRFMMNQLGCFAGGTVLRLAKDLAENNKGARVLVVCSEITVVTFRGPNDTHFDSLVGQALFGDGAAAVIIGSDPIPNVERPLFELVSAAQTLLPDSKNSICGELREIGLTFHLLKDVAELISNNIEKSLVEVFQPLGISAWNSIFWVAHPGGPAILNQVELKLGLNPEKLGATRHVLSEYGNMSSASILFVLDEMRKSSTQKGFDTTGEGLKWGVLIGFGPGITFETIVLHSVSTQGSFGIRDWDYNFGIEFKIIFIPYLVLGIS</sequence>